<protein>
    <recommendedName>
        <fullName>Protein cereblon</fullName>
        <shortName>Protein PiL</shortName>
    </recommendedName>
</protein>
<keyword id="KW-0002">3D-structure</keyword>
<keyword id="KW-0025">Alternative splicing</keyword>
<keyword id="KW-0963">Cytoplasm</keyword>
<keyword id="KW-0472">Membrane</keyword>
<keyword id="KW-0479">Metal-binding</keyword>
<keyword id="KW-0539">Nucleus</keyword>
<keyword id="KW-0597">Phosphoprotein</keyword>
<keyword id="KW-1185">Reference proteome</keyword>
<keyword id="KW-0832">Ubl conjugation</keyword>
<keyword id="KW-0833">Ubl conjugation pathway</keyword>
<keyword id="KW-0862">Zinc</keyword>
<evidence type="ECO:0000250" key="1"/>
<evidence type="ECO:0000250" key="2">
    <source>
        <dbReference type="UniProtKB" id="Q56AP7"/>
    </source>
</evidence>
<evidence type="ECO:0000250" key="3">
    <source>
        <dbReference type="UniProtKB" id="Q96SW2"/>
    </source>
</evidence>
<evidence type="ECO:0000255" key="4">
    <source>
        <dbReference type="PROSITE-ProRule" id="PRU01123"/>
    </source>
</evidence>
<evidence type="ECO:0000255" key="5">
    <source>
        <dbReference type="PROSITE-ProRule" id="PRU01124"/>
    </source>
</evidence>
<evidence type="ECO:0000256" key="6">
    <source>
        <dbReference type="SAM" id="MobiDB-lite"/>
    </source>
</evidence>
<evidence type="ECO:0000269" key="7">
    <source>
    </source>
</evidence>
<evidence type="ECO:0000269" key="8">
    <source>
    </source>
</evidence>
<evidence type="ECO:0000269" key="9">
    <source>
    </source>
</evidence>
<evidence type="ECO:0000269" key="10">
    <source>
    </source>
</evidence>
<evidence type="ECO:0000303" key="11">
    <source>
    </source>
</evidence>
<evidence type="ECO:0000303" key="12">
    <source>
    </source>
</evidence>
<evidence type="ECO:0000305" key="13"/>
<evidence type="ECO:0007829" key="14">
    <source>
        <dbReference type="PDB" id="3WX1"/>
    </source>
</evidence>
<evidence type="ECO:0007829" key="15">
    <source>
        <dbReference type="PDB" id="4TZC"/>
    </source>
</evidence>
<evidence type="ECO:0007829" key="16">
    <source>
        <dbReference type="PDB" id="5YJ0"/>
    </source>
</evidence>
<name>CRBN_MOUSE</name>
<dbReference type="EMBL" id="AK050557">
    <property type="protein sequence ID" value="BAC34322.1"/>
    <property type="molecule type" value="mRNA"/>
</dbReference>
<dbReference type="EMBL" id="AK076144">
    <property type="protein sequence ID" value="BAC36214.1"/>
    <property type="molecule type" value="mRNA"/>
</dbReference>
<dbReference type="EMBL" id="AK077707">
    <property type="protein sequence ID" value="BAC36970.1"/>
    <property type="molecule type" value="mRNA"/>
</dbReference>
<dbReference type="EMBL" id="AK160219">
    <property type="protein sequence ID" value="BAE35697.1"/>
    <property type="molecule type" value="mRNA"/>
</dbReference>
<dbReference type="EMBL" id="BC046967">
    <property type="protein sequence ID" value="AAH46967.1"/>
    <property type="molecule type" value="mRNA"/>
</dbReference>
<dbReference type="EMBL" id="BC069905">
    <property type="protein sequence ID" value="AAH69905.1"/>
    <property type="molecule type" value="mRNA"/>
</dbReference>
<dbReference type="EMBL" id="BC086488">
    <property type="protein sequence ID" value="AAH86488.1"/>
    <property type="molecule type" value="mRNA"/>
</dbReference>
<dbReference type="EMBL" id="AF229032">
    <property type="protein sequence ID" value="AAF35895.1"/>
    <property type="status" value="ALT_FRAME"/>
    <property type="molecule type" value="mRNA"/>
</dbReference>
<dbReference type="CCDS" id="CCDS39583.1">
    <molecule id="Q8C7D2-1"/>
</dbReference>
<dbReference type="CCDS" id="CCDS39584.1">
    <molecule id="Q8C7D2-3"/>
</dbReference>
<dbReference type="RefSeq" id="NP_067424.2">
    <molecule id="Q8C7D2-3"/>
    <property type="nucleotide sequence ID" value="NM_021449.3"/>
</dbReference>
<dbReference type="RefSeq" id="NP_780566.1">
    <molecule id="Q8C7D2-1"/>
    <property type="nucleotide sequence ID" value="NM_175357.3"/>
</dbReference>
<dbReference type="PDB" id="3WX1">
    <property type="method" value="X-ray"/>
    <property type="resolution" value="1.93 A"/>
    <property type="chains" value="A/B=322-430"/>
</dbReference>
<dbReference type="PDB" id="3WX2">
    <property type="method" value="X-ray"/>
    <property type="resolution" value="2.00 A"/>
    <property type="chains" value="A/B=322-430"/>
</dbReference>
<dbReference type="PDB" id="4TZC">
    <property type="method" value="X-ray"/>
    <property type="resolution" value="1.88 A"/>
    <property type="chains" value="A/B/C/D=322-428"/>
</dbReference>
<dbReference type="PDB" id="4TZU">
    <property type="method" value="X-ray"/>
    <property type="resolution" value="2.00 A"/>
    <property type="chains" value="A/B/C/D=322-429"/>
</dbReference>
<dbReference type="PDB" id="5YIZ">
    <property type="method" value="X-ray"/>
    <property type="resolution" value="2.00 A"/>
    <property type="chains" value="A/D/G/J/M/P/S/V/Y/b/e/h/k/n/q/t=322-430"/>
</dbReference>
<dbReference type="PDB" id="5YJ0">
    <property type="method" value="X-ray"/>
    <property type="resolution" value="1.80 A"/>
    <property type="chains" value="A/D/G/J/M/P/S/V/Y/b/e/h/k/n/q/t=322-430"/>
</dbReference>
<dbReference type="PDB" id="5YJ1">
    <property type="method" value="X-ray"/>
    <property type="resolution" value="2.00 A"/>
    <property type="chains" value="A/D/G/J/M/P/S/V/Y/b/e/h/k/n/q/t=322-430"/>
</dbReference>
<dbReference type="PDBsum" id="3WX1"/>
<dbReference type="PDBsum" id="3WX2"/>
<dbReference type="PDBsum" id="4TZC"/>
<dbReference type="PDBsum" id="4TZU"/>
<dbReference type="PDBsum" id="5YIZ"/>
<dbReference type="PDBsum" id="5YJ0"/>
<dbReference type="PDBsum" id="5YJ1"/>
<dbReference type="SMR" id="Q8C7D2"/>
<dbReference type="BioGRID" id="208437">
    <property type="interactions" value="11"/>
</dbReference>
<dbReference type="FunCoup" id="Q8C7D2">
    <property type="interactions" value="4252"/>
</dbReference>
<dbReference type="STRING" id="10090.ENSMUSP00000108865"/>
<dbReference type="BindingDB" id="Q8C7D2"/>
<dbReference type="GlyGen" id="Q8C7D2">
    <property type="glycosylation" value="1 site, 1 N-linked glycan (1 site)"/>
</dbReference>
<dbReference type="iPTMnet" id="Q8C7D2"/>
<dbReference type="PhosphoSitePlus" id="Q8C7D2"/>
<dbReference type="PaxDb" id="10090-ENSMUSP00000108865"/>
<dbReference type="PeptideAtlas" id="Q8C7D2"/>
<dbReference type="ProteomicsDB" id="278031">
    <molecule id="Q8C7D2-1"/>
</dbReference>
<dbReference type="ProteomicsDB" id="278032">
    <molecule id="Q8C7D2-2"/>
</dbReference>
<dbReference type="ProteomicsDB" id="278033">
    <molecule id="Q8C7D2-3"/>
</dbReference>
<dbReference type="Pumba" id="Q8C7D2"/>
<dbReference type="Antibodypedia" id="25089">
    <property type="antibodies" value="151 antibodies from 30 providers"/>
</dbReference>
<dbReference type="DNASU" id="58799"/>
<dbReference type="Ensembl" id="ENSMUST00000013882.10">
    <molecule id="Q8C7D2-3"/>
    <property type="protein sequence ID" value="ENSMUSP00000013882.8"/>
    <property type="gene ID" value="ENSMUSG00000005362.15"/>
</dbReference>
<dbReference type="Ensembl" id="ENSMUST00000113239.10">
    <molecule id="Q8C7D2-1"/>
    <property type="protein sequence ID" value="ENSMUSP00000108865.4"/>
    <property type="gene ID" value="ENSMUSG00000005362.15"/>
</dbReference>
<dbReference type="GeneID" id="58799"/>
<dbReference type="KEGG" id="mmu:58799"/>
<dbReference type="UCSC" id="uc009dda.2">
    <molecule id="Q8C7D2-3"/>
    <property type="organism name" value="mouse"/>
</dbReference>
<dbReference type="UCSC" id="uc009ddb.2">
    <molecule id="Q8C7D2-1"/>
    <property type="organism name" value="mouse"/>
</dbReference>
<dbReference type="AGR" id="MGI:1913277"/>
<dbReference type="CTD" id="51185"/>
<dbReference type="MGI" id="MGI:1913277">
    <property type="gene designation" value="Crbn"/>
</dbReference>
<dbReference type="VEuPathDB" id="HostDB:ENSMUSG00000005362"/>
<dbReference type="eggNOG" id="KOG1400">
    <property type="taxonomic scope" value="Eukaryota"/>
</dbReference>
<dbReference type="GeneTree" id="ENSGT00390000016404"/>
<dbReference type="HOGENOM" id="CLU_025648_1_1_1"/>
<dbReference type="InParanoid" id="Q8C7D2"/>
<dbReference type="OMA" id="AYQMYDS"/>
<dbReference type="OrthoDB" id="267517at2759"/>
<dbReference type="PhylomeDB" id="Q8C7D2"/>
<dbReference type="TreeFam" id="TF106115"/>
<dbReference type="UniPathway" id="UPA00143"/>
<dbReference type="BioGRID-ORCS" id="58799">
    <property type="hits" value="2 hits in 77 CRISPR screens"/>
</dbReference>
<dbReference type="ChiTaRS" id="Crbn">
    <property type="organism name" value="mouse"/>
</dbReference>
<dbReference type="EvolutionaryTrace" id="Q8C7D2"/>
<dbReference type="PRO" id="PR:Q8C7D2"/>
<dbReference type="Proteomes" id="UP000000589">
    <property type="component" value="Chromosome 6"/>
</dbReference>
<dbReference type="RNAct" id="Q8C7D2">
    <property type="molecule type" value="protein"/>
</dbReference>
<dbReference type="Bgee" id="ENSMUSG00000005362">
    <property type="expression patterns" value="Expressed in pontine nuclear group and 255 other cell types or tissues"/>
</dbReference>
<dbReference type="ExpressionAtlas" id="Q8C7D2">
    <property type="expression patterns" value="baseline and differential"/>
</dbReference>
<dbReference type="GO" id="GO:0031464">
    <property type="term" value="C:Cul4A-RING E3 ubiquitin ligase complex"/>
    <property type="evidence" value="ECO:0000250"/>
    <property type="project" value="UniProtKB"/>
</dbReference>
<dbReference type="GO" id="GO:0005737">
    <property type="term" value="C:cytoplasm"/>
    <property type="evidence" value="ECO:0000250"/>
    <property type="project" value="UniProtKB"/>
</dbReference>
<dbReference type="GO" id="GO:0016020">
    <property type="term" value="C:membrane"/>
    <property type="evidence" value="ECO:0007669"/>
    <property type="project" value="UniProtKB-SubCell"/>
</dbReference>
<dbReference type="GO" id="GO:0005634">
    <property type="term" value="C:nucleus"/>
    <property type="evidence" value="ECO:0000250"/>
    <property type="project" value="UniProtKB"/>
</dbReference>
<dbReference type="GO" id="GO:0048471">
    <property type="term" value="C:perinuclear region of cytoplasm"/>
    <property type="evidence" value="ECO:0007669"/>
    <property type="project" value="Ensembl"/>
</dbReference>
<dbReference type="GO" id="GO:0046872">
    <property type="term" value="F:metal ion binding"/>
    <property type="evidence" value="ECO:0007669"/>
    <property type="project" value="UniProtKB-KW"/>
</dbReference>
<dbReference type="GO" id="GO:0044325">
    <property type="term" value="F:transmembrane transporter binding"/>
    <property type="evidence" value="ECO:0007669"/>
    <property type="project" value="Ensembl"/>
</dbReference>
<dbReference type="GO" id="GO:0035641">
    <property type="term" value="P:locomotory exploration behavior"/>
    <property type="evidence" value="ECO:0000315"/>
    <property type="project" value="UniProtKB"/>
</dbReference>
<dbReference type="GO" id="GO:1902607">
    <property type="term" value="P:negative regulation of large conductance calcium-activated potassium channel activity"/>
    <property type="evidence" value="ECO:0000315"/>
    <property type="project" value="UniProtKB"/>
</dbReference>
<dbReference type="GO" id="GO:0031333">
    <property type="term" value="P:negative regulation of protein-containing complex assembly"/>
    <property type="evidence" value="ECO:0007669"/>
    <property type="project" value="Ensembl"/>
</dbReference>
<dbReference type="GO" id="GO:0031334">
    <property type="term" value="P:positive regulation of protein-containing complex assembly"/>
    <property type="evidence" value="ECO:0007669"/>
    <property type="project" value="Ensembl"/>
</dbReference>
<dbReference type="GO" id="GO:0030177">
    <property type="term" value="P:positive regulation of Wnt signaling pathway"/>
    <property type="evidence" value="ECO:0007669"/>
    <property type="project" value="Ensembl"/>
</dbReference>
<dbReference type="GO" id="GO:0043161">
    <property type="term" value="P:proteasome-mediated ubiquitin-dependent protein catabolic process"/>
    <property type="evidence" value="ECO:0000250"/>
    <property type="project" value="UniProtKB"/>
</dbReference>
<dbReference type="GO" id="GO:0016567">
    <property type="term" value="P:protein ubiquitination"/>
    <property type="evidence" value="ECO:0000250"/>
    <property type="project" value="UniProtKB"/>
</dbReference>
<dbReference type="CDD" id="cd15777">
    <property type="entry name" value="CRBN_C_like"/>
    <property type="match status" value="1"/>
</dbReference>
<dbReference type="FunFam" id="1.20.58.1480:FF:000004">
    <property type="entry name" value="Cereblon, isoform CRA_c"/>
    <property type="match status" value="1"/>
</dbReference>
<dbReference type="FunFam" id="2.30.130.40:FF:000002">
    <property type="entry name" value="Cereblon, isoform CRA_c"/>
    <property type="match status" value="1"/>
</dbReference>
<dbReference type="FunFam" id="2.170.150.20:FF:000007">
    <property type="entry name" value="Protein cereblon"/>
    <property type="match status" value="1"/>
</dbReference>
<dbReference type="Gene3D" id="1.20.58.1480">
    <property type="match status" value="1"/>
</dbReference>
<dbReference type="Gene3D" id="2.30.130.40">
    <property type="entry name" value="LON domain-like"/>
    <property type="match status" value="1"/>
</dbReference>
<dbReference type="Gene3D" id="2.170.150.20">
    <property type="entry name" value="Peptide methionine sulfoxide reductase"/>
    <property type="match status" value="1"/>
</dbReference>
<dbReference type="InterPro" id="IPR034750">
    <property type="entry name" value="CULT"/>
</dbReference>
<dbReference type="InterPro" id="IPR003111">
    <property type="entry name" value="Lon_prtase_N"/>
</dbReference>
<dbReference type="InterPro" id="IPR046336">
    <property type="entry name" value="Lon_prtase_N_sf"/>
</dbReference>
<dbReference type="InterPro" id="IPR015947">
    <property type="entry name" value="PUA-like_sf"/>
</dbReference>
<dbReference type="InterPro" id="IPR004910">
    <property type="entry name" value="Yippee/Mis18/Cereblon"/>
</dbReference>
<dbReference type="PANTHER" id="PTHR14255">
    <property type="entry name" value="CEREBLON"/>
    <property type="match status" value="1"/>
</dbReference>
<dbReference type="PANTHER" id="PTHR14255:SF4">
    <property type="entry name" value="PROTEIN CEREBLON"/>
    <property type="match status" value="1"/>
</dbReference>
<dbReference type="Pfam" id="PF02190">
    <property type="entry name" value="LON_substr_bdg"/>
    <property type="match status" value="1"/>
</dbReference>
<dbReference type="Pfam" id="PF03226">
    <property type="entry name" value="Yippee-Mis18"/>
    <property type="match status" value="1"/>
</dbReference>
<dbReference type="SMART" id="SM00464">
    <property type="entry name" value="LON"/>
    <property type="match status" value="1"/>
</dbReference>
<dbReference type="SUPFAM" id="SSF88697">
    <property type="entry name" value="PUA domain-like"/>
    <property type="match status" value="1"/>
</dbReference>
<dbReference type="PROSITE" id="PS51788">
    <property type="entry name" value="CULT"/>
    <property type="match status" value="1"/>
</dbReference>
<dbReference type="PROSITE" id="PS51787">
    <property type="entry name" value="LON_N"/>
    <property type="match status" value="1"/>
</dbReference>
<gene>
    <name type="primary">Crbn</name>
</gene>
<proteinExistence type="evidence at protein level"/>
<organism>
    <name type="scientific">Mus musculus</name>
    <name type="common">Mouse</name>
    <dbReference type="NCBI Taxonomy" id="10090"/>
    <lineage>
        <taxon>Eukaryota</taxon>
        <taxon>Metazoa</taxon>
        <taxon>Chordata</taxon>
        <taxon>Craniata</taxon>
        <taxon>Vertebrata</taxon>
        <taxon>Euteleostomi</taxon>
        <taxon>Mammalia</taxon>
        <taxon>Eutheria</taxon>
        <taxon>Euarchontoglires</taxon>
        <taxon>Glires</taxon>
        <taxon>Rodentia</taxon>
        <taxon>Myomorpha</taxon>
        <taxon>Muroidea</taxon>
        <taxon>Muridae</taxon>
        <taxon>Murinae</taxon>
        <taxon>Mus</taxon>
        <taxon>Mus</taxon>
    </lineage>
</organism>
<comment type="function">
    <text evidence="3 10 13">Substrate recognition component of a DCX (DDB1-CUL4-X-box) E3 protein ligase complex that mediates the ubiquitination and subsequent proteasomal degradation of target proteins, such as MEIS2, ILF2 or GLUL. Normal degradation of key regulatory proteins is required for normal limb outgrowth and expression of the fibroblast growth factor FGF8 (By similarity). Maintains presynaptic glutamate release and consequently, cognitive functions such as memory and learning, by negatively regulating large-conductance calcium-activated potassium (BK) channels in excitatory neurons (PubMed:29530986). Likely to function by regulating the assembly and neuronal surface expression of BK channels via its interaction with KCNT1 (By similarity). May also be involved in regulating anxiety-like behaviors via a BK channel-independent mechanism (PubMed:29530986). Plays a negative role in TLR4 signaling by interacting with TRAF6 and ECSIT, leading to inhibition of ECSIT ubiquitination, an important step of the signaling (By similarity).</text>
</comment>
<comment type="pathway">
    <text evidence="3">Protein modification; protein ubiquitination.</text>
</comment>
<comment type="subunit">
    <text evidence="2 3">Component of a DCX (DDB1-CUL4-X-box) protein ligase complex, at least composed of CRBN, CUL4A, DDB1 and RBX1. Interacts directly with DDB1 (By similarity). Interacts with KCNT1 (By similarity). Interacts with ILF2 (By similarity). Interacts with TRAF6 and ECSIT (By similarity).</text>
</comment>
<comment type="subcellular location">
    <subcellularLocation>
        <location evidence="3">Cytoplasm</location>
    </subcellularLocation>
    <subcellularLocation>
        <location evidence="3">Nucleus</location>
    </subcellularLocation>
    <subcellularLocation>
        <location evidence="1">Membrane</location>
        <topology evidence="1">Peripheral membrane protein</topology>
    </subcellularLocation>
</comment>
<comment type="alternative products">
    <event type="alternative splicing"/>
    <isoform>
        <id>Q8C7D2-1</id>
        <name>1</name>
        <sequence type="displayed"/>
    </isoform>
    <isoform>
        <id>Q8C7D2-2</id>
        <name>2</name>
        <sequence type="described" ref="VSP_015210"/>
    </isoform>
    <isoform>
        <id>Q8C7D2-3</id>
        <name>3</name>
        <sequence type="described" ref="VSP_039063"/>
    </isoform>
</comment>
<comment type="tissue specificity">
    <text evidence="7">Highly expressed in brain.</text>
</comment>
<comment type="developmental stage">
    <text evidence="7">In brain, expression is abundant in the cerebellum, with less expression in the neocortical, hippocampus and striatum in adult. Neocortical expression increases from embryonic stages to adulthood.</text>
</comment>
<comment type="domain">
    <text evidence="9">The CULT domain binds thalidomide and related drugs. Thalidomide binding leads to a change in substrate specificity of the human DCX (DDB1-CUL4-X-box) E3 protein ligase complex, while no such change is observed in rodents.</text>
</comment>
<comment type="PTM">
    <text evidence="3">Ubiquitinated, ubiquitination is mediated by its own DCX protein ligase complex.</text>
</comment>
<comment type="disruption phenotype">
    <text evidence="8 10">No obvious phenotype, however mice display increased BK channel activity and a subsequent decrease in synaptic transmission and presynaptic release probability in excitatory synapses (PubMed:29530986). Mice also display cognitive behavioral defects such as abnormal passive avoidance, hyperanxious behavior and decreased preference for new objects (PubMed:29530986). Treatment with the BK blocker paxilline rescues all synaptic and behavioral abnormalities except for hyperanxiety (PubMed:29530986). Brain and synaptic morphology is normal and long-term synaptic plasticity is not affected (PubMed:29530986). Conditional knockout in the forebrain results in no obvious phenotype, however mice display a deficit in contextual fear learning whereas anxiety-like behavior is unaffected (PubMed:21995942).</text>
</comment>
<comment type="similarity">
    <text evidence="13">Belongs to the CRBN family.</text>
</comment>
<comment type="sequence caution" evidence="13">
    <conflict type="frameshift">
        <sequence resource="EMBL-CDS" id="AAF35895"/>
    </conflict>
</comment>
<accession>Q8C7D2</accession>
<accession>Q3TVC2</accession>
<accession>Q5RJV6</accession>
<accession>Q6IS49</accession>
<accession>Q80XJ1</accession>
<accession>Q8BP45</accession>
<accession>Q8C6B7</accession>
<accession>Q9JKR4</accession>
<reference key="1">
    <citation type="journal article" date="2005" name="Science">
        <title>The transcriptional landscape of the mammalian genome.</title>
        <authorList>
            <person name="Carninci P."/>
            <person name="Kasukawa T."/>
            <person name="Katayama S."/>
            <person name="Gough J."/>
            <person name="Frith M.C."/>
            <person name="Maeda N."/>
            <person name="Oyama R."/>
            <person name="Ravasi T."/>
            <person name="Lenhard B."/>
            <person name="Wells C."/>
            <person name="Kodzius R."/>
            <person name="Shimokawa K."/>
            <person name="Bajic V.B."/>
            <person name="Brenner S.E."/>
            <person name="Batalov S."/>
            <person name="Forrest A.R."/>
            <person name="Zavolan M."/>
            <person name="Davis M.J."/>
            <person name="Wilming L.G."/>
            <person name="Aidinis V."/>
            <person name="Allen J.E."/>
            <person name="Ambesi-Impiombato A."/>
            <person name="Apweiler R."/>
            <person name="Aturaliya R.N."/>
            <person name="Bailey T.L."/>
            <person name="Bansal M."/>
            <person name="Baxter L."/>
            <person name="Beisel K.W."/>
            <person name="Bersano T."/>
            <person name="Bono H."/>
            <person name="Chalk A.M."/>
            <person name="Chiu K.P."/>
            <person name="Choudhary V."/>
            <person name="Christoffels A."/>
            <person name="Clutterbuck D.R."/>
            <person name="Crowe M.L."/>
            <person name="Dalla E."/>
            <person name="Dalrymple B.P."/>
            <person name="de Bono B."/>
            <person name="Della Gatta G."/>
            <person name="di Bernardo D."/>
            <person name="Down T."/>
            <person name="Engstrom P."/>
            <person name="Fagiolini M."/>
            <person name="Faulkner G."/>
            <person name="Fletcher C.F."/>
            <person name="Fukushima T."/>
            <person name="Furuno M."/>
            <person name="Futaki S."/>
            <person name="Gariboldi M."/>
            <person name="Georgii-Hemming P."/>
            <person name="Gingeras T.R."/>
            <person name="Gojobori T."/>
            <person name="Green R.E."/>
            <person name="Gustincich S."/>
            <person name="Harbers M."/>
            <person name="Hayashi Y."/>
            <person name="Hensch T.K."/>
            <person name="Hirokawa N."/>
            <person name="Hill D."/>
            <person name="Huminiecki L."/>
            <person name="Iacono M."/>
            <person name="Ikeo K."/>
            <person name="Iwama A."/>
            <person name="Ishikawa T."/>
            <person name="Jakt M."/>
            <person name="Kanapin A."/>
            <person name="Katoh M."/>
            <person name="Kawasawa Y."/>
            <person name="Kelso J."/>
            <person name="Kitamura H."/>
            <person name="Kitano H."/>
            <person name="Kollias G."/>
            <person name="Krishnan S.P."/>
            <person name="Kruger A."/>
            <person name="Kummerfeld S.K."/>
            <person name="Kurochkin I.V."/>
            <person name="Lareau L.F."/>
            <person name="Lazarevic D."/>
            <person name="Lipovich L."/>
            <person name="Liu J."/>
            <person name="Liuni S."/>
            <person name="McWilliam S."/>
            <person name="Madan Babu M."/>
            <person name="Madera M."/>
            <person name="Marchionni L."/>
            <person name="Matsuda H."/>
            <person name="Matsuzawa S."/>
            <person name="Miki H."/>
            <person name="Mignone F."/>
            <person name="Miyake S."/>
            <person name="Morris K."/>
            <person name="Mottagui-Tabar S."/>
            <person name="Mulder N."/>
            <person name="Nakano N."/>
            <person name="Nakauchi H."/>
            <person name="Ng P."/>
            <person name="Nilsson R."/>
            <person name="Nishiguchi S."/>
            <person name="Nishikawa S."/>
            <person name="Nori F."/>
            <person name="Ohara O."/>
            <person name="Okazaki Y."/>
            <person name="Orlando V."/>
            <person name="Pang K.C."/>
            <person name="Pavan W.J."/>
            <person name="Pavesi G."/>
            <person name="Pesole G."/>
            <person name="Petrovsky N."/>
            <person name="Piazza S."/>
            <person name="Reed J."/>
            <person name="Reid J.F."/>
            <person name="Ring B.Z."/>
            <person name="Ringwald M."/>
            <person name="Rost B."/>
            <person name="Ruan Y."/>
            <person name="Salzberg S.L."/>
            <person name="Sandelin A."/>
            <person name="Schneider C."/>
            <person name="Schoenbach C."/>
            <person name="Sekiguchi K."/>
            <person name="Semple C.A."/>
            <person name="Seno S."/>
            <person name="Sessa L."/>
            <person name="Sheng Y."/>
            <person name="Shibata Y."/>
            <person name="Shimada H."/>
            <person name="Shimada K."/>
            <person name="Silva D."/>
            <person name="Sinclair B."/>
            <person name="Sperling S."/>
            <person name="Stupka E."/>
            <person name="Sugiura K."/>
            <person name="Sultana R."/>
            <person name="Takenaka Y."/>
            <person name="Taki K."/>
            <person name="Tammoja K."/>
            <person name="Tan S.L."/>
            <person name="Tang S."/>
            <person name="Taylor M.S."/>
            <person name="Tegner J."/>
            <person name="Teichmann S.A."/>
            <person name="Ueda H.R."/>
            <person name="van Nimwegen E."/>
            <person name="Verardo R."/>
            <person name="Wei C.L."/>
            <person name="Yagi K."/>
            <person name="Yamanishi H."/>
            <person name="Zabarovsky E."/>
            <person name="Zhu S."/>
            <person name="Zimmer A."/>
            <person name="Hide W."/>
            <person name="Bult C."/>
            <person name="Grimmond S.M."/>
            <person name="Teasdale R.D."/>
            <person name="Liu E.T."/>
            <person name="Brusic V."/>
            <person name="Quackenbush J."/>
            <person name="Wahlestedt C."/>
            <person name="Mattick J.S."/>
            <person name="Hume D.A."/>
            <person name="Kai C."/>
            <person name="Sasaki D."/>
            <person name="Tomaru Y."/>
            <person name="Fukuda S."/>
            <person name="Kanamori-Katayama M."/>
            <person name="Suzuki M."/>
            <person name="Aoki J."/>
            <person name="Arakawa T."/>
            <person name="Iida J."/>
            <person name="Imamura K."/>
            <person name="Itoh M."/>
            <person name="Kato T."/>
            <person name="Kawaji H."/>
            <person name="Kawagashira N."/>
            <person name="Kawashima T."/>
            <person name="Kojima M."/>
            <person name="Kondo S."/>
            <person name="Konno H."/>
            <person name="Nakano K."/>
            <person name="Ninomiya N."/>
            <person name="Nishio T."/>
            <person name="Okada M."/>
            <person name="Plessy C."/>
            <person name="Shibata K."/>
            <person name="Shiraki T."/>
            <person name="Suzuki S."/>
            <person name="Tagami M."/>
            <person name="Waki K."/>
            <person name="Watahiki A."/>
            <person name="Okamura-Oho Y."/>
            <person name="Suzuki H."/>
            <person name="Kawai J."/>
            <person name="Hayashizaki Y."/>
        </authorList>
    </citation>
    <scope>NUCLEOTIDE SEQUENCE [LARGE SCALE MRNA] (ISOFORMS 1 AND 3)</scope>
    <source>
        <strain>C57BL/6J</strain>
        <tissue>Head</tissue>
        <tissue>Pancreas</tissue>
    </source>
</reference>
<reference key="2">
    <citation type="journal article" date="2004" name="Genome Res.">
        <title>The status, quality, and expansion of the NIH full-length cDNA project: the Mammalian Gene Collection (MGC).</title>
        <authorList>
            <consortium name="The MGC Project Team"/>
        </authorList>
    </citation>
    <scope>NUCLEOTIDE SEQUENCE [LARGE SCALE MRNA] (ISOFORM 2)</scope>
    <scope>NUCLEOTIDE SEQUENCE [LARGE SCALE MRNA] OF 6-445 (ISOFORM 1)</scope>
    <source>
        <tissue>Eye</tissue>
    </source>
</reference>
<reference key="3">
    <citation type="submission" date="2000-01" db="EMBL/GenBank/DDBJ databases">
        <title>A novel gene mutated in R197 insertional mutant mice.</title>
        <authorList>
            <person name="Rose J.B."/>
            <person name="van Driel I.R."/>
            <person name="Tan S."/>
        </authorList>
    </citation>
    <scope>NUCLEOTIDE SEQUENCE [MRNA] OF 8-445</scope>
</reference>
<reference key="4">
    <citation type="journal article" date="2010" name="J. Neurogenet.">
        <title>Temporal and spatial mouse brain expression of cereblon, an ionic channel regulator involved in human intelligence.</title>
        <authorList>
            <person name="Higgins J.J."/>
            <person name="Tal A.L."/>
            <person name="Sun X."/>
            <person name="Hauck S.C."/>
            <person name="Hao J."/>
            <person name="Kosofosky B.E."/>
            <person name="Rajadhyaksha A.M."/>
        </authorList>
    </citation>
    <scope>TISSUE SPECIFICITY</scope>
    <scope>DEVELOPMENTAL STAGE</scope>
</reference>
<reference key="5">
    <citation type="journal article" date="2012" name="Behav. Brain Res.">
        <title>Behavioral characterization of cereblon forebrain-specific conditional null mice: a model for human non-syndromic intellectual disability.</title>
        <authorList>
            <person name="Rajadhyaksha A.M."/>
            <person name="Ra S."/>
            <person name="Kishinevsky S."/>
            <person name="Lee A.S."/>
            <person name="Romanienko P."/>
            <person name="DuBoff M."/>
            <person name="Yang C."/>
            <person name="Zupan B."/>
            <person name="Byrne M."/>
            <person name="Daruwalla Z.R."/>
            <person name="Mark W."/>
            <person name="Kosofsky B.E."/>
            <person name="Toth M."/>
            <person name="Higgins J.J."/>
        </authorList>
    </citation>
    <scope>DISRUPTION PHENOTYPE</scope>
</reference>
<reference key="6">
    <citation type="journal article" date="2018" name="J. Neurosci.">
        <title>Cereblon Maintains Synaptic and Cognitive Function by Regulating BK Channel.</title>
        <authorList>
            <person name="Choi T.Y."/>
            <person name="Lee S.H."/>
            <person name="Kim Y.J."/>
            <person name="Bae J.R."/>
            <person name="Lee K.M."/>
            <person name="Jo Y."/>
            <person name="Kim S.J."/>
            <person name="Lee A.R."/>
            <person name="Choi S."/>
            <person name="Choi L.M."/>
            <person name="Bang S."/>
            <person name="Song M.R."/>
            <person name="Chung J."/>
            <person name="Lee K.J."/>
            <person name="Kim S.H."/>
            <person name="Park C.S."/>
            <person name="Choi S.Y."/>
        </authorList>
    </citation>
    <scope>FUNCTION</scope>
    <scope>DISRUPTION PHENOTYPE</scope>
</reference>
<reference key="7">
    <citation type="journal article" date="2014" name="Nat. Struct. Mol. Biol.">
        <title>Structure of the human cereblon-DDB1-lenalidomide complex reveals basis for responsiveness to thalidomide analogs.</title>
        <authorList>
            <person name="Chamberlain P.P."/>
            <person name="Lopez-Girona A."/>
            <person name="Miller K."/>
            <person name="Carmel G."/>
            <person name="Pagarigan B."/>
            <person name="Chie-Leon B."/>
            <person name="Rychak E."/>
            <person name="Corral L.G."/>
            <person name="Ren Y.J."/>
            <person name="Wang M."/>
            <person name="Riley M."/>
            <person name="Delker S.L."/>
            <person name="Ito T."/>
            <person name="Ando H."/>
            <person name="Mori T."/>
            <person name="Hirano Y."/>
            <person name="Handa H."/>
            <person name="Hakoshima T."/>
            <person name="Daniel T.O."/>
            <person name="Cathers B.E."/>
        </authorList>
    </citation>
    <scope>X-RAY CRYSTALLOGRAPHY (1.88 ANGSTROMS) OF 322-430 IN COMPLEX WITH S-THALIDOMIDE AND ZINC</scope>
    <scope>DOMAIN</scope>
</reference>
<feature type="chain" id="PRO_0000076161" description="Protein cereblon">
    <location>
        <begin position="1"/>
        <end position="445"/>
    </location>
</feature>
<feature type="domain" description="Lon N-terminal" evidence="4">
    <location>
        <begin position="84"/>
        <end position="322"/>
    </location>
</feature>
<feature type="domain" description="CULT" evidence="5">
    <location>
        <begin position="321"/>
        <end position="429"/>
    </location>
</feature>
<feature type="region of interest" description="Disordered" evidence="6">
    <location>
        <begin position="1"/>
        <end position="48"/>
    </location>
</feature>
<feature type="compositionally biased region" description="Acidic residues" evidence="6">
    <location>
        <begin position="24"/>
        <end position="38"/>
    </location>
</feature>
<feature type="binding site" evidence="9">
    <location>
        <position position="326"/>
    </location>
    <ligand>
        <name>Zn(2+)</name>
        <dbReference type="ChEBI" id="CHEBI:29105"/>
    </ligand>
</feature>
<feature type="binding site" evidence="9">
    <location>
        <position position="329"/>
    </location>
    <ligand>
        <name>Zn(2+)</name>
        <dbReference type="ChEBI" id="CHEBI:29105"/>
    </ligand>
</feature>
<feature type="binding site" evidence="9">
    <location>
        <position position="381"/>
    </location>
    <ligand>
        <name>(S)-thalidomide</name>
        <dbReference type="ChEBI" id="CHEBI:61918"/>
    </ligand>
</feature>
<feature type="binding site" evidence="9">
    <location>
        <position position="383"/>
    </location>
    <ligand>
        <name>(S)-thalidomide</name>
        <dbReference type="ChEBI" id="CHEBI:61918"/>
    </ligand>
</feature>
<feature type="binding site" evidence="9">
    <location>
        <position position="389"/>
    </location>
    <ligand>
        <name>(S)-thalidomide</name>
        <dbReference type="ChEBI" id="CHEBI:61918"/>
    </ligand>
</feature>
<feature type="binding site" evidence="9">
    <location>
        <position position="394"/>
    </location>
    <ligand>
        <name>Zn(2+)</name>
        <dbReference type="ChEBI" id="CHEBI:29105"/>
    </ligand>
</feature>
<feature type="binding site" evidence="9">
    <location>
        <position position="397"/>
    </location>
    <ligand>
        <name>Zn(2+)</name>
        <dbReference type="ChEBI" id="CHEBI:29105"/>
    </ligand>
</feature>
<feature type="modified residue" description="Phosphoserine" evidence="3">
    <location>
        <position position="25"/>
    </location>
</feature>
<feature type="splice variant" id="VSP_015210" description="In isoform 2." evidence="11">
    <original>MAGEGDQQDAAHNMGNHLPLLPA</original>
    <variation>MGNHLPLLP</variation>
    <location>
        <begin position="1"/>
        <end position="23"/>
    </location>
</feature>
<feature type="splice variant" id="VSP_039063" description="In isoform 3." evidence="12">
    <location>
        <position position="23"/>
    </location>
</feature>
<feature type="sequence conflict" description="In Ref. 3; AAF35895." evidence="13" ref="3">
    <original>A</original>
    <variation>R</variation>
    <location>
        <position position="10"/>
    </location>
</feature>
<feature type="sequence conflict" description="In Ref. 3; AAF35895." evidence="13" ref="3">
    <original>N</original>
    <variation>D</variation>
    <location>
        <position position="48"/>
    </location>
</feature>
<feature type="sequence conflict" description="In Ref. 1; BAC36214." evidence="13" ref="1">
    <original>H</original>
    <variation>P</variation>
    <location>
        <position position="71"/>
    </location>
</feature>
<feature type="sequence conflict" description="In Ref. 3; AAF35895." evidence="13" ref="3">
    <original>Q</original>
    <variation>R</variation>
    <location>
        <position position="82"/>
    </location>
</feature>
<feature type="sequence conflict" description="In Ref. 3; AAF35895." evidence="13" ref="3">
    <original>A</original>
    <variation>G</variation>
    <location>
        <position position="127"/>
    </location>
</feature>
<feature type="sequence conflict" description="In Ref. 2; AAH86488." evidence="13" ref="2">
    <original>L</original>
    <variation>V</variation>
    <location>
        <position position="202"/>
    </location>
</feature>
<feature type="sequence conflict" description="In Ref. 3; AAF35895." evidence="13" ref="3">
    <original>R</original>
    <variation>A</variation>
    <location>
        <position position="310"/>
    </location>
</feature>
<feature type="sequence conflict" description="In Ref. 1; BAC36970." evidence="13" ref="1">
    <original>I</original>
    <variation>V</variation>
    <location>
        <position position="317"/>
    </location>
</feature>
<feature type="sequence conflict" description="In Ref. 1; BAE35697." evidence="13" ref="1">
    <original>D</original>
    <variation>N</variation>
    <location>
        <position position="439"/>
    </location>
</feature>
<feature type="strand" evidence="16">
    <location>
        <begin position="323"/>
        <end position="326"/>
    </location>
</feature>
<feature type="turn" evidence="16">
    <location>
        <begin position="327"/>
        <end position="329"/>
    </location>
</feature>
<feature type="strand" evidence="16">
    <location>
        <begin position="333"/>
        <end position="336"/>
    </location>
</feature>
<feature type="helix" evidence="16">
    <location>
        <begin position="337"/>
        <end position="339"/>
    </location>
</feature>
<feature type="helix" evidence="15">
    <location>
        <begin position="350"/>
        <end position="353"/>
    </location>
</feature>
<feature type="helix" evidence="14">
    <location>
        <begin position="359"/>
        <end position="361"/>
    </location>
</feature>
<feature type="strand" evidence="16">
    <location>
        <begin position="362"/>
        <end position="366"/>
    </location>
</feature>
<feature type="strand" evidence="16">
    <location>
        <begin position="370"/>
        <end position="378"/>
    </location>
</feature>
<feature type="strand" evidence="16">
    <location>
        <begin position="387"/>
        <end position="394"/>
    </location>
</feature>
<feature type="turn" evidence="16">
    <location>
        <begin position="395"/>
        <end position="397"/>
    </location>
</feature>
<feature type="strand" evidence="16">
    <location>
        <begin position="400"/>
        <end position="409"/>
    </location>
</feature>
<feature type="strand" evidence="16">
    <location>
        <begin position="413"/>
        <end position="421"/>
    </location>
</feature>
<feature type="helix" evidence="16">
    <location>
        <begin position="422"/>
        <end position="424"/>
    </location>
</feature>
<sequence>MAGEGDQQDAAHNMGNHLPLLPADSEDEDDEIEMEVEDQDSKEARKPNIINFDTSLPTSHTYLGADMEEFHGRTLHDDDSCQVIPVLPEVLMILIPGQTLPLQLSHPQEVSMVRNLIQKDRTFAVLAYSNVQEREAQFGTTAEIYAYREEQEFGIEVVKVKAIGRQRFKVLELRTQSDGIQQAKVQILPECVLPSTMSAVQLESLNKCQVFPSKPISWEDQYSCKWWQKYQKRKFHCANLTSWPRWLYSLYDAETLMDRIKKQLREWDENLKDDSLPENPIDFSYRVAACLPIDDVLRIQLLKIGSAIQRLRCELDIMNKCTSLCCKQCQETEITTKNEIFSLSLCGPMAAYVNPHGYVHETLTVYKASNLNLIGRPSTVHSWFPGYAWTIAQCKICASHIGWKFTATKKDMSPQKFWGLTRSALLPTIPETEDEISPDKVILCL</sequence>